<sequence length="380" mass="43190">MKVFKQQLEQLGAQNQYRSIPDLIHQGRYITRENCKMLNMSSNDYLGLASDENLRRSFLQQYGGNFPSFTSSSSRLLTGNFPIYTDLEELVAQRFQRESALLFNSGYHANLGILPALTTTKSLILADKFVHASMIDGIRLSRCAFFRYRHNDYEHLKNLLEKNVGKFDRTFIVTESVFSMDGDVADLKQLVQLKKQFPNTYLYVDEAHAIGVYGQNGLGIAERDNLIAEIDLLVGTFGKALASVGAYAVCNQVLKECLINQMRPLIFSTALPPFNVAWTYFIFERLPQFSKERSHLEQLSAFLRREVAHRTQIMPSQTCIVPYILGGNEATLAKAEYLQRQGYYCLPIRPPTVPKGTSRIRLSLTADMTMDEVRQFAACL</sequence>
<organism>
    <name type="scientific">Neisseria meningitidis serogroup C (strain 053442)</name>
    <dbReference type="NCBI Taxonomy" id="374833"/>
    <lineage>
        <taxon>Bacteria</taxon>
        <taxon>Pseudomonadati</taxon>
        <taxon>Pseudomonadota</taxon>
        <taxon>Betaproteobacteria</taxon>
        <taxon>Neisseriales</taxon>
        <taxon>Neisseriaceae</taxon>
        <taxon>Neisseria</taxon>
    </lineage>
</organism>
<feature type="chain" id="PRO_0000381050" description="Putative 8-amino-7-oxononanoate synthase">
    <location>
        <begin position="1"/>
        <end position="380"/>
    </location>
</feature>
<feature type="binding site" evidence="1">
    <location>
        <position position="18"/>
    </location>
    <ligand>
        <name>substrate</name>
    </ligand>
</feature>
<feature type="binding site" evidence="1">
    <location>
        <begin position="106"/>
        <end position="107"/>
    </location>
    <ligand>
        <name>pyridoxal 5'-phosphate</name>
        <dbReference type="ChEBI" id="CHEBI:597326"/>
    </ligand>
</feature>
<feature type="binding site" evidence="1">
    <location>
        <position position="131"/>
    </location>
    <ligand>
        <name>substrate</name>
    </ligand>
</feature>
<feature type="binding site" evidence="1">
    <location>
        <position position="179"/>
    </location>
    <ligand>
        <name>pyridoxal 5'-phosphate</name>
        <dbReference type="ChEBI" id="CHEBI:597326"/>
    </ligand>
</feature>
<feature type="binding site" evidence="1">
    <location>
        <begin position="205"/>
        <end position="208"/>
    </location>
    <ligand>
        <name>pyridoxal 5'-phosphate</name>
        <dbReference type="ChEBI" id="CHEBI:597326"/>
    </ligand>
</feature>
<feature type="binding site" evidence="1">
    <location>
        <begin position="236"/>
        <end position="239"/>
    </location>
    <ligand>
        <name>pyridoxal 5'-phosphate</name>
        <dbReference type="ChEBI" id="CHEBI:597326"/>
    </ligand>
</feature>
<feature type="binding site" evidence="1">
    <location>
        <position position="352"/>
    </location>
    <ligand>
        <name>substrate</name>
    </ligand>
</feature>
<feature type="modified residue" description="N6-(pyridoxal phosphate)lysine" evidence="1">
    <location>
        <position position="239"/>
    </location>
</feature>
<name>BIOF_NEIM0</name>
<evidence type="ECO:0000250" key="1"/>
<evidence type="ECO:0000305" key="2"/>
<gene>
    <name type="primary">bioF</name>
    <name type="ordered locus">NMCC_1670</name>
</gene>
<reference key="1">
    <citation type="journal article" date="2008" name="Genomics">
        <title>Characterization of ST-4821 complex, a unique Neisseria meningitidis clone.</title>
        <authorList>
            <person name="Peng J."/>
            <person name="Yang L."/>
            <person name="Yang F."/>
            <person name="Yang J."/>
            <person name="Yan Y."/>
            <person name="Nie H."/>
            <person name="Zhang X."/>
            <person name="Xiong Z."/>
            <person name="Jiang Y."/>
            <person name="Cheng F."/>
            <person name="Xu X."/>
            <person name="Chen S."/>
            <person name="Sun L."/>
            <person name="Li W."/>
            <person name="Shen Y."/>
            <person name="Shao Z."/>
            <person name="Liang X."/>
            <person name="Xu J."/>
            <person name="Jin Q."/>
        </authorList>
    </citation>
    <scope>NUCLEOTIDE SEQUENCE [LARGE SCALE GENOMIC DNA]</scope>
    <source>
        <strain>053442</strain>
    </source>
</reference>
<comment type="function">
    <text evidence="1">Catalyzes the decarboxylative condensation of pimeloyl-[acyl-carrier protein] and L-alanine to produce 8-amino-7-oxononanoate (AON), [acyl-carrier protein], and carbon dioxide.</text>
</comment>
<comment type="catalytic activity">
    <reaction>
        <text>6-carboxyhexanoyl-[ACP] + L-alanine + H(+) = (8S)-8-amino-7-oxononanoate + holo-[ACP] + CO2</text>
        <dbReference type="Rhea" id="RHEA:42288"/>
        <dbReference type="Rhea" id="RHEA-COMP:9685"/>
        <dbReference type="Rhea" id="RHEA-COMP:9955"/>
        <dbReference type="ChEBI" id="CHEBI:15378"/>
        <dbReference type="ChEBI" id="CHEBI:16526"/>
        <dbReference type="ChEBI" id="CHEBI:57972"/>
        <dbReference type="ChEBI" id="CHEBI:64479"/>
        <dbReference type="ChEBI" id="CHEBI:78846"/>
        <dbReference type="ChEBI" id="CHEBI:149468"/>
        <dbReference type="EC" id="2.3.1.47"/>
    </reaction>
</comment>
<comment type="cofactor">
    <cofactor evidence="1">
        <name>pyridoxal 5'-phosphate</name>
        <dbReference type="ChEBI" id="CHEBI:597326"/>
    </cofactor>
</comment>
<comment type="pathway">
    <text>Cofactor biosynthesis; biotin biosynthesis.</text>
</comment>
<comment type="subunit">
    <text evidence="1">Homodimer.</text>
</comment>
<comment type="similarity">
    <text evidence="2">Belongs to the class-II pyridoxal-phosphate-dependent aminotransferase family. BioF subfamily.</text>
</comment>
<comment type="sequence caution" evidence="2">
    <conflict type="erroneous initiation">
        <sequence resource="EMBL-CDS" id="ABX73815"/>
    </conflict>
    <text>Truncated N-terminus.</text>
</comment>
<protein>
    <recommendedName>
        <fullName>Putative 8-amino-7-oxononanoate synthase</fullName>
        <shortName>AONS</shortName>
        <ecNumber>2.3.1.47</ecNumber>
    </recommendedName>
    <alternativeName>
        <fullName>7-keto-8-amino-pelargonic acid synthase</fullName>
        <shortName>7-KAP synthase</shortName>
    </alternativeName>
    <alternativeName>
        <fullName>8-amino-7-ketopelargonate synthase</fullName>
    </alternativeName>
</protein>
<accession>A9M251</accession>
<proteinExistence type="inferred from homology"/>
<dbReference type="EC" id="2.3.1.47"/>
<dbReference type="EMBL" id="CP000381">
    <property type="protein sequence ID" value="ABX73815.1"/>
    <property type="status" value="ALT_INIT"/>
    <property type="molecule type" value="Genomic_DNA"/>
</dbReference>
<dbReference type="RefSeq" id="WP_002245921.1">
    <property type="nucleotide sequence ID" value="NC_010120.1"/>
</dbReference>
<dbReference type="SMR" id="A9M251"/>
<dbReference type="GeneID" id="93387568"/>
<dbReference type="KEGG" id="nmn:NMCC_1670"/>
<dbReference type="HOGENOM" id="CLU_015846_11_2_4"/>
<dbReference type="UniPathway" id="UPA00078"/>
<dbReference type="Proteomes" id="UP000001177">
    <property type="component" value="Chromosome"/>
</dbReference>
<dbReference type="GO" id="GO:0008710">
    <property type="term" value="F:8-amino-7-oxononanoate synthase activity"/>
    <property type="evidence" value="ECO:0007669"/>
    <property type="project" value="UniProtKB-EC"/>
</dbReference>
<dbReference type="GO" id="GO:0030170">
    <property type="term" value="F:pyridoxal phosphate binding"/>
    <property type="evidence" value="ECO:0007669"/>
    <property type="project" value="InterPro"/>
</dbReference>
<dbReference type="GO" id="GO:0009102">
    <property type="term" value="P:biotin biosynthetic process"/>
    <property type="evidence" value="ECO:0007669"/>
    <property type="project" value="UniProtKB-UniPathway"/>
</dbReference>
<dbReference type="CDD" id="cd06454">
    <property type="entry name" value="KBL_like"/>
    <property type="match status" value="1"/>
</dbReference>
<dbReference type="Gene3D" id="3.90.1150.10">
    <property type="entry name" value="Aspartate Aminotransferase, domain 1"/>
    <property type="match status" value="1"/>
</dbReference>
<dbReference type="Gene3D" id="3.40.640.10">
    <property type="entry name" value="Type I PLP-dependent aspartate aminotransferase-like (Major domain)"/>
    <property type="match status" value="1"/>
</dbReference>
<dbReference type="InterPro" id="IPR001917">
    <property type="entry name" value="Aminotrans_II_pyridoxalP_BS"/>
</dbReference>
<dbReference type="InterPro" id="IPR004839">
    <property type="entry name" value="Aminotransferase_I/II_large"/>
</dbReference>
<dbReference type="InterPro" id="IPR050087">
    <property type="entry name" value="AON_synthase_class-II"/>
</dbReference>
<dbReference type="InterPro" id="IPR004723">
    <property type="entry name" value="AONS_Archaea/Proteobacteria"/>
</dbReference>
<dbReference type="InterPro" id="IPR015424">
    <property type="entry name" value="PyrdxlP-dep_Trfase"/>
</dbReference>
<dbReference type="InterPro" id="IPR015421">
    <property type="entry name" value="PyrdxlP-dep_Trfase_major"/>
</dbReference>
<dbReference type="InterPro" id="IPR015422">
    <property type="entry name" value="PyrdxlP-dep_Trfase_small"/>
</dbReference>
<dbReference type="NCBIfam" id="TIGR00858">
    <property type="entry name" value="bioF"/>
    <property type="match status" value="1"/>
</dbReference>
<dbReference type="PANTHER" id="PTHR13693:SF100">
    <property type="entry name" value="8-AMINO-7-OXONONANOATE SYNTHASE"/>
    <property type="match status" value="1"/>
</dbReference>
<dbReference type="PANTHER" id="PTHR13693">
    <property type="entry name" value="CLASS II AMINOTRANSFERASE/8-AMINO-7-OXONONANOATE SYNTHASE"/>
    <property type="match status" value="1"/>
</dbReference>
<dbReference type="Pfam" id="PF00155">
    <property type="entry name" value="Aminotran_1_2"/>
    <property type="match status" value="1"/>
</dbReference>
<dbReference type="SUPFAM" id="SSF53383">
    <property type="entry name" value="PLP-dependent transferases"/>
    <property type="match status" value="1"/>
</dbReference>
<dbReference type="PROSITE" id="PS00599">
    <property type="entry name" value="AA_TRANSFER_CLASS_2"/>
    <property type="match status" value="1"/>
</dbReference>
<keyword id="KW-0093">Biotin biosynthesis</keyword>
<keyword id="KW-0663">Pyridoxal phosphate</keyword>
<keyword id="KW-0808">Transferase</keyword>